<reference key="1">
    <citation type="journal article" date="2006" name="Proc. Natl. Acad. Sci. U.S.A.">
        <title>Identification of genes subject to positive selection in uropathogenic strains of Escherichia coli: a comparative genomics approach.</title>
        <authorList>
            <person name="Chen S.L."/>
            <person name="Hung C.-S."/>
            <person name="Xu J."/>
            <person name="Reigstad C.S."/>
            <person name="Magrini V."/>
            <person name="Sabo A."/>
            <person name="Blasiar D."/>
            <person name="Bieri T."/>
            <person name="Meyer R.R."/>
            <person name="Ozersky P."/>
            <person name="Armstrong J.R."/>
            <person name="Fulton R.S."/>
            <person name="Latreille J.P."/>
            <person name="Spieth J."/>
            <person name="Hooton T.M."/>
            <person name="Mardis E.R."/>
            <person name="Hultgren S.J."/>
            <person name="Gordon J.I."/>
        </authorList>
    </citation>
    <scope>NUCLEOTIDE SEQUENCE [LARGE SCALE GENOMIC DNA]</scope>
    <source>
        <strain>UTI89 / UPEC</strain>
    </source>
</reference>
<evidence type="ECO:0000250" key="1"/>
<evidence type="ECO:0000255" key="2">
    <source>
        <dbReference type="HAMAP-Rule" id="MF_00118"/>
    </source>
</evidence>
<evidence type="ECO:0000305" key="3"/>
<gene>
    <name evidence="2" type="primary">tuf2</name>
    <name type="synonym">tufA</name>
    <name type="ordered locus">UTI89_C3841</name>
</gene>
<keyword id="KW-0963">Cytoplasm</keyword>
<keyword id="KW-0251">Elongation factor</keyword>
<keyword id="KW-0342">GTP-binding</keyword>
<keyword id="KW-0378">Hydrolase</keyword>
<keyword id="KW-0460">Magnesium</keyword>
<keyword id="KW-0479">Metal-binding</keyword>
<keyword id="KW-0547">Nucleotide-binding</keyword>
<keyword id="KW-0648">Protein biosynthesis</keyword>
<proteinExistence type="inferred from homology"/>
<name>EFTU2_ECOUT</name>
<comment type="function">
    <text evidence="2">GTP hydrolase that promotes the GTP-dependent binding of aminoacyl-tRNA to the A-site of ribosomes during protein biosynthesis.</text>
</comment>
<comment type="catalytic activity">
    <reaction evidence="2">
        <text>GTP + H2O = GDP + phosphate + H(+)</text>
        <dbReference type="Rhea" id="RHEA:19669"/>
        <dbReference type="ChEBI" id="CHEBI:15377"/>
        <dbReference type="ChEBI" id="CHEBI:15378"/>
        <dbReference type="ChEBI" id="CHEBI:37565"/>
        <dbReference type="ChEBI" id="CHEBI:43474"/>
        <dbReference type="ChEBI" id="CHEBI:58189"/>
        <dbReference type="EC" id="3.6.5.3"/>
    </reaction>
    <physiologicalReaction direction="left-to-right" evidence="2">
        <dbReference type="Rhea" id="RHEA:19670"/>
    </physiologicalReaction>
</comment>
<comment type="subunit">
    <text evidence="2">Monomer.</text>
</comment>
<comment type="subcellular location">
    <subcellularLocation>
        <location evidence="2">Cytoplasm</location>
    </subcellularLocation>
</comment>
<comment type="similarity">
    <text evidence="2">Belongs to the TRAFAC class translation factor GTPase superfamily. Classic translation factor GTPase family. EF-Tu/EF-1A subfamily.</text>
</comment>
<comment type="sequence caution" evidence="3">
    <conflict type="erroneous initiation">
        <sequence resource="EMBL-CDS" id="ABE09270"/>
    </conflict>
</comment>
<feature type="chain" id="PRO_0000337385" description="Elongation factor Tu 2">
    <location>
        <begin position="1"/>
        <end position="394"/>
    </location>
</feature>
<feature type="domain" description="tr-type G">
    <location>
        <begin position="10"/>
        <end position="204"/>
    </location>
</feature>
<feature type="region of interest" description="G1" evidence="1">
    <location>
        <begin position="19"/>
        <end position="26"/>
    </location>
</feature>
<feature type="region of interest" description="G2" evidence="1">
    <location>
        <begin position="60"/>
        <end position="64"/>
    </location>
</feature>
<feature type="region of interest" description="G3" evidence="1">
    <location>
        <begin position="81"/>
        <end position="84"/>
    </location>
</feature>
<feature type="region of interest" description="G4" evidence="1">
    <location>
        <begin position="136"/>
        <end position="139"/>
    </location>
</feature>
<feature type="region of interest" description="G5" evidence="1">
    <location>
        <begin position="174"/>
        <end position="176"/>
    </location>
</feature>
<feature type="binding site" evidence="2">
    <location>
        <begin position="19"/>
        <end position="26"/>
    </location>
    <ligand>
        <name>GTP</name>
        <dbReference type="ChEBI" id="CHEBI:37565"/>
    </ligand>
</feature>
<feature type="binding site" evidence="2">
    <location>
        <position position="26"/>
    </location>
    <ligand>
        <name>Mg(2+)</name>
        <dbReference type="ChEBI" id="CHEBI:18420"/>
    </ligand>
</feature>
<feature type="binding site" evidence="2">
    <location>
        <begin position="81"/>
        <end position="85"/>
    </location>
    <ligand>
        <name>GTP</name>
        <dbReference type="ChEBI" id="CHEBI:37565"/>
    </ligand>
</feature>
<feature type="binding site" evidence="2">
    <location>
        <begin position="136"/>
        <end position="139"/>
    </location>
    <ligand>
        <name>GTP</name>
        <dbReference type="ChEBI" id="CHEBI:37565"/>
    </ligand>
</feature>
<accession>Q1R5U4</accession>
<dbReference type="EC" id="3.6.5.3" evidence="2"/>
<dbReference type="EMBL" id="CP000243">
    <property type="protein sequence ID" value="ABE09270.1"/>
    <property type="status" value="ALT_INIT"/>
    <property type="molecule type" value="Genomic_DNA"/>
</dbReference>
<dbReference type="SMR" id="Q1R5U4"/>
<dbReference type="KEGG" id="eci:UTI89_C3841"/>
<dbReference type="HOGENOM" id="CLU_007265_0_2_6"/>
<dbReference type="Proteomes" id="UP000001952">
    <property type="component" value="Chromosome"/>
</dbReference>
<dbReference type="GO" id="GO:0005829">
    <property type="term" value="C:cytosol"/>
    <property type="evidence" value="ECO:0007669"/>
    <property type="project" value="TreeGrafter"/>
</dbReference>
<dbReference type="GO" id="GO:0005525">
    <property type="term" value="F:GTP binding"/>
    <property type="evidence" value="ECO:0007669"/>
    <property type="project" value="UniProtKB-UniRule"/>
</dbReference>
<dbReference type="GO" id="GO:0003924">
    <property type="term" value="F:GTPase activity"/>
    <property type="evidence" value="ECO:0007669"/>
    <property type="project" value="InterPro"/>
</dbReference>
<dbReference type="GO" id="GO:0097216">
    <property type="term" value="F:guanosine tetraphosphate binding"/>
    <property type="evidence" value="ECO:0007669"/>
    <property type="project" value="UniProtKB-ARBA"/>
</dbReference>
<dbReference type="GO" id="GO:0003746">
    <property type="term" value="F:translation elongation factor activity"/>
    <property type="evidence" value="ECO:0007669"/>
    <property type="project" value="UniProtKB-UniRule"/>
</dbReference>
<dbReference type="CDD" id="cd01884">
    <property type="entry name" value="EF_Tu"/>
    <property type="match status" value="1"/>
</dbReference>
<dbReference type="CDD" id="cd03697">
    <property type="entry name" value="EFTU_II"/>
    <property type="match status" value="1"/>
</dbReference>
<dbReference type="CDD" id="cd03707">
    <property type="entry name" value="EFTU_III"/>
    <property type="match status" value="1"/>
</dbReference>
<dbReference type="FunFam" id="2.40.30.10:FF:000001">
    <property type="entry name" value="Elongation factor Tu"/>
    <property type="match status" value="1"/>
</dbReference>
<dbReference type="FunFam" id="3.40.50.300:FF:000003">
    <property type="entry name" value="Elongation factor Tu"/>
    <property type="match status" value="1"/>
</dbReference>
<dbReference type="Gene3D" id="3.40.50.300">
    <property type="entry name" value="P-loop containing nucleotide triphosphate hydrolases"/>
    <property type="match status" value="1"/>
</dbReference>
<dbReference type="Gene3D" id="2.40.30.10">
    <property type="entry name" value="Translation factors"/>
    <property type="match status" value="2"/>
</dbReference>
<dbReference type="HAMAP" id="MF_00118_B">
    <property type="entry name" value="EF_Tu_B"/>
    <property type="match status" value="1"/>
</dbReference>
<dbReference type="InterPro" id="IPR041709">
    <property type="entry name" value="EF-Tu_GTP-bd"/>
</dbReference>
<dbReference type="InterPro" id="IPR050055">
    <property type="entry name" value="EF-Tu_GTPase"/>
</dbReference>
<dbReference type="InterPro" id="IPR004161">
    <property type="entry name" value="EFTu-like_2"/>
</dbReference>
<dbReference type="InterPro" id="IPR033720">
    <property type="entry name" value="EFTU_2"/>
</dbReference>
<dbReference type="InterPro" id="IPR031157">
    <property type="entry name" value="G_TR_CS"/>
</dbReference>
<dbReference type="InterPro" id="IPR027417">
    <property type="entry name" value="P-loop_NTPase"/>
</dbReference>
<dbReference type="InterPro" id="IPR005225">
    <property type="entry name" value="Small_GTP-bd"/>
</dbReference>
<dbReference type="InterPro" id="IPR000795">
    <property type="entry name" value="T_Tr_GTP-bd_dom"/>
</dbReference>
<dbReference type="InterPro" id="IPR009000">
    <property type="entry name" value="Transl_B-barrel_sf"/>
</dbReference>
<dbReference type="InterPro" id="IPR009001">
    <property type="entry name" value="Transl_elong_EF1A/Init_IF2_C"/>
</dbReference>
<dbReference type="InterPro" id="IPR004541">
    <property type="entry name" value="Transl_elong_EFTu/EF1A_bac/org"/>
</dbReference>
<dbReference type="InterPro" id="IPR004160">
    <property type="entry name" value="Transl_elong_EFTu/EF1A_C"/>
</dbReference>
<dbReference type="NCBIfam" id="TIGR00485">
    <property type="entry name" value="EF-Tu"/>
    <property type="match status" value="1"/>
</dbReference>
<dbReference type="NCBIfam" id="NF000766">
    <property type="entry name" value="PRK00049.1"/>
    <property type="match status" value="1"/>
</dbReference>
<dbReference type="NCBIfam" id="NF009372">
    <property type="entry name" value="PRK12735.1"/>
    <property type="match status" value="1"/>
</dbReference>
<dbReference type="NCBIfam" id="NF009373">
    <property type="entry name" value="PRK12736.1"/>
    <property type="match status" value="1"/>
</dbReference>
<dbReference type="NCBIfam" id="TIGR00231">
    <property type="entry name" value="small_GTP"/>
    <property type="match status" value="1"/>
</dbReference>
<dbReference type="PANTHER" id="PTHR43721:SF22">
    <property type="entry name" value="ELONGATION FACTOR TU, MITOCHONDRIAL"/>
    <property type="match status" value="1"/>
</dbReference>
<dbReference type="PANTHER" id="PTHR43721">
    <property type="entry name" value="ELONGATION FACTOR TU-RELATED"/>
    <property type="match status" value="1"/>
</dbReference>
<dbReference type="Pfam" id="PF00009">
    <property type="entry name" value="GTP_EFTU"/>
    <property type="match status" value="1"/>
</dbReference>
<dbReference type="Pfam" id="PF03144">
    <property type="entry name" value="GTP_EFTU_D2"/>
    <property type="match status" value="1"/>
</dbReference>
<dbReference type="Pfam" id="PF03143">
    <property type="entry name" value="GTP_EFTU_D3"/>
    <property type="match status" value="1"/>
</dbReference>
<dbReference type="PRINTS" id="PR00315">
    <property type="entry name" value="ELONGATNFCT"/>
</dbReference>
<dbReference type="SUPFAM" id="SSF50465">
    <property type="entry name" value="EF-Tu/eEF-1alpha/eIF2-gamma C-terminal domain"/>
    <property type="match status" value="1"/>
</dbReference>
<dbReference type="SUPFAM" id="SSF52540">
    <property type="entry name" value="P-loop containing nucleoside triphosphate hydrolases"/>
    <property type="match status" value="1"/>
</dbReference>
<dbReference type="SUPFAM" id="SSF50447">
    <property type="entry name" value="Translation proteins"/>
    <property type="match status" value="1"/>
</dbReference>
<dbReference type="PROSITE" id="PS00301">
    <property type="entry name" value="G_TR_1"/>
    <property type="match status" value="1"/>
</dbReference>
<dbReference type="PROSITE" id="PS51722">
    <property type="entry name" value="G_TR_2"/>
    <property type="match status" value="1"/>
</dbReference>
<protein>
    <recommendedName>
        <fullName evidence="2">Elongation factor Tu 2</fullName>
        <shortName evidence="2">EF-Tu 2</shortName>
        <ecNumber evidence="2">3.6.5.3</ecNumber>
    </recommendedName>
</protein>
<sequence>MSKEKFERTKPHVNVGTIGHVDHGKTTLTAAITTVLAKTYGGAARAFDQIDNAPEEKARGITINTSHVEYDTPTRHYAHVDCPGHADYVKNMITGAAQMDGAILVVAATDGPMPQTREHILLGRQVGVPYIIVFLNKCDMVDDEELLELVEMEVRELLSQYDFPGDDTPIVRGSALKALEGDAEWEAKILELAGFLDSYIPEPERAIDKPFLLPIEDVFSISGRGTVVTGRVERGIIKVGEEVEIVGIKETQKSTCTGVEMFRKLLDEGRAGENVGVLLRGIKREEIERGQVLAKPGTIKPHTKFESEVYILSKDEGGRHTPFFKGYRPQFYFRTTDVTGTIELPEGVEMVMPGDNIKMVVTLIHPIAMDDGLRFAIREGGRTVGAGVVAKVLS</sequence>
<organism>
    <name type="scientific">Escherichia coli (strain UTI89 / UPEC)</name>
    <dbReference type="NCBI Taxonomy" id="364106"/>
    <lineage>
        <taxon>Bacteria</taxon>
        <taxon>Pseudomonadati</taxon>
        <taxon>Pseudomonadota</taxon>
        <taxon>Gammaproteobacteria</taxon>
        <taxon>Enterobacterales</taxon>
        <taxon>Enterobacteriaceae</taxon>
        <taxon>Escherichia</taxon>
    </lineage>
</organism>